<sequence length="807" mass="91245">MNSSNNNDSSSSNSNMNNSLSPTLVTHSDASMGSGRASPDNSHMGRGIWNPSYVNQGSQRSPQQQHQNHHQQQQQQQQQQQQNSQFCFVNPWNEEKVTNSQQNLVYPPQYDDLNSNESLDAYRRRKSSLVVPPARAPAPNPFQYDSYPAYTSSNTSLAGNSSGQYPSGYQQQQQQVYQQGAIHPSQFGSRFVPSLYDRQDFQRRQSLAATNYSSNFSSLNSNTNQGTNSIPVMSPYRRLSAYPPSTSPPLQPPFKQLRRDEVQGQKLSIPQMQLCNSKNDLQPVLNATPKFRRASLNSKTISPLVSVTKSLITTYSLCSPEFTYQTSKNPKRVLTKPSEGKCNNGFDNINSDYILYVNDVLGVEQNRKYLVLDILGQGTFGQVVKCQNLLTKEILAVKVVKSRTEYLTQSITEAKILELLNQKIDPTNKHHFLRMYDSFVHKNHLCLVFELLSNNLYELLKQNKFHGLSIQLIRTFTTQILDSLCVLKESKLIHCDLKPENILLCAPDKPELKIIDFGSSCEEARTVYTYIQSRFYRAPEIILGIPYSTSIDMWSLGCIVAELFLGIPIFPGASEYNQLTRIIDTLGYPPSWMIDMGKNSGKFMKKLAPEESSSSTQKHRMKTIEEFCREYNIVEKPSKQYFKWRKLPDIIRNYRYPKSIQNSQELIDQEMQNRECLIHFLGGVLNLNPLERWTPQQAMLHPFITKQEFTGEWFPPGSSLPGPSEKHDDAKGQQSEYGSANDSSNNAGHNYVYNPSSATGGADSVDIGAISKRKENTSGDISNNFAVTHSVQEGPTSAFNKLHIVEE</sequence>
<keyword id="KW-0067">ATP-binding</keyword>
<keyword id="KW-0963">Cytoplasm</keyword>
<keyword id="KW-0418">Kinase</keyword>
<keyword id="KW-0547">Nucleotide-binding</keyword>
<keyword id="KW-0539">Nucleus</keyword>
<keyword id="KW-0597">Phosphoprotein</keyword>
<keyword id="KW-1185">Reference proteome</keyword>
<keyword id="KW-0723">Serine/threonine-protein kinase</keyword>
<keyword id="KW-0808">Transferase</keyword>
<keyword id="KW-0829">Tyrosine-protein kinase</keyword>
<accession>P14680</accession>
<accession>D6VW43</accession>
<evidence type="ECO:0000255" key="1">
    <source>
        <dbReference type="PROSITE-ProRule" id="PRU00159"/>
    </source>
</evidence>
<evidence type="ECO:0000255" key="2">
    <source>
        <dbReference type="PROSITE-ProRule" id="PRU10027"/>
    </source>
</evidence>
<evidence type="ECO:0000256" key="3">
    <source>
        <dbReference type="SAM" id="MobiDB-lite"/>
    </source>
</evidence>
<evidence type="ECO:0000269" key="4">
    <source>
    </source>
</evidence>
<evidence type="ECO:0000269" key="5">
    <source>
    </source>
</evidence>
<evidence type="ECO:0000305" key="6"/>
<evidence type="ECO:0007744" key="7">
    <source>
    </source>
</evidence>
<evidence type="ECO:0007744" key="8">
    <source>
    </source>
</evidence>
<evidence type="ECO:0007744" key="9">
    <source>
    </source>
</evidence>
<evidence type="ECO:0007744" key="10">
    <source>
    </source>
</evidence>
<feature type="chain" id="PRO_0000086828" description="Dual specificity protein kinase YAK1">
    <location>
        <begin position="1"/>
        <end position="807"/>
    </location>
</feature>
<feature type="domain" description="Protein kinase" evidence="1">
    <location>
        <begin position="369"/>
        <end position="704"/>
    </location>
</feature>
<feature type="region of interest" description="Disordered" evidence="3">
    <location>
        <begin position="1"/>
        <end position="84"/>
    </location>
</feature>
<feature type="region of interest" description="Disordered" evidence="3">
    <location>
        <begin position="124"/>
        <end position="180"/>
    </location>
</feature>
<feature type="region of interest" description="Disordered" evidence="3">
    <location>
        <begin position="214"/>
        <end position="254"/>
    </location>
</feature>
<feature type="region of interest" description="Disordered" evidence="3">
    <location>
        <begin position="714"/>
        <end position="758"/>
    </location>
</feature>
<feature type="compositionally biased region" description="Low complexity" evidence="3">
    <location>
        <begin position="1"/>
        <end position="19"/>
    </location>
</feature>
<feature type="compositionally biased region" description="Polar residues" evidence="3">
    <location>
        <begin position="20"/>
        <end position="31"/>
    </location>
</feature>
<feature type="compositionally biased region" description="Low complexity" evidence="3">
    <location>
        <begin position="55"/>
        <end position="84"/>
    </location>
</feature>
<feature type="compositionally biased region" description="Polar residues" evidence="3">
    <location>
        <begin position="149"/>
        <end position="160"/>
    </location>
</feature>
<feature type="compositionally biased region" description="Low complexity" evidence="3">
    <location>
        <begin position="161"/>
        <end position="180"/>
    </location>
</feature>
<feature type="compositionally biased region" description="Low complexity" evidence="3">
    <location>
        <begin position="214"/>
        <end position="224"/>
    </location>
</feature>
<feature type="compositionally biased region" description="Polar residues" evidence="3">
    <location>
        <begin position="732"/>
        <end position="758"/>
    </location>
</feature>
<feature type="active site" description="Proton acceptor" evidence="1 2">
    <location>
        <position position="496"/>
    </location>
</feature>
<feature type="binding site" evidence="1">
    <location>
        <begin position="375"/>
        <end position="383"/>
    </location>
    <ligand>
        <name>ATP</name>
        <dbReference type="ChEBI" id="CHEBI:30616"/>
    </ligand>
</feature>
<feature type="binding site" evidence="1">
    <location>
        <position position="398"/>
    </location>
    <ligand>
        <name>ATP</name>
        <dbReference type="ChEBI" id="CHEBI:30616"/>
    </ligand>
</feature>
<feature type="modified residue" description="Phosphoserine" evidence="9">
    <location>
        <position position="38"/>
    </location>
</feature>
<feature type="modified residue" description="Phosphoserine" evidence="10">
    <location>
        <position position="115"/>
    </location>
</feature>
<feature type="modified residue" description="Phosphoserine" evidence="10">
    <location>
        <position position="118"/>
    </location>
</feature>
<feature type="modified residue" description="Phosphoserine" evidence="8 10">
    <location>
        <position position="127"/>
    </location>
</feature>
<feature type="modified residue" description="Phosphoserine" evidence="10">
    <location>
        <position position="206"/>
    </location>
</feature>
<feature type="modified residue" description="Phosphoserine" evidence="10">
    <location>
        <position position="240"/>
    </location>
</feature>
<feature type="modified residue" description="Phosphoserine" evidence="10">
    <location>
        <position position="245"/>
    </location>
</feature>
<feature type="modified residue" description="Phosphoserine" evidence="10">
    <location>
        <position position="247"/>
    </location>
</feature>
<feature type="modified residue" description="Phosphothreonine" evidence="9 10">
    <location>
        <position position="288"/>
    </location>
</feature>
<feature type="modified residue" description="Phosphoserine" evidence="7">
    <location>
        <position position="295"/>
    </location>
</feature>
<feature type="modified residue" description="Phosphotyrosine" evidence="4 8 10">
    <location>
        <position position="530"/>
    </location>
</feature>
<name>YAK1_YEAST</name>
<dbReference type="EC" id="2.7.12.1"/>
<dbReference type="EMBL" id="X16056">
    <property type="protein sequence ID" value="CAA34192.1"/>
    <property type="molecule type" value="Genomic_DNA"/>
</dbReference>
<dbReference type="EMBL" id="X87371">
    <property type="protein sequence ID" value="CAA60814.1"/>
    <property type="molecule type" value="Genomic_DNA"/>
</dbReference>
<dbReference type="EMBL" id="Z49417">
    <property type="protein sequence ID" value="CAA89437.1"/>
    <property type="molecule type" value="Genomic_DNA"/>
</dbReference>
<dbReference type="EMBL" id="BK006943">
    <property type="protein sequence ID" value="DAA08659.1"/>
    <property type="molecule type" value="Genomic_DNA"/>
</dbReference>
<dbReference type="PIR" id="A32582">
    <property type="entry name" value="A32582"/>
</dbReference>
<dbReference type="RefSeq" id="NP_012394.1">
    <property type="nucleotide sequence ID" value="NM_001181574.1"/>
</dbReference>
<dbReference type="SMR" id="P14680"/>
<dbReference type="BioGRID" id="33616">
    <property type="interactions" value="189"/>
</dbReference>
<dbReference type="DIP" id="DIP-1374N"/>
<dbReference type="ELM" id="P14680"/>
<dbReference type="FunCoup" id="P14680">
    <property type="interactions" value="535"/>
</dbReference>
<dbReference type="IntAct" id="P14680">
    <property type="interactions" value="49"/>
</dbReference>
<dbReference type="MINT" id="P14680"/>
<dbReference type="STRING" id="4932.YJL141C"/>
<dbReference type="GlyGen" id="P14680">
    <property type="glycosylation" value="3 sites, 1 O-linked glycan (2 sites)"/>
</dbReference>
<dbReference type="iPTMnet" id="P14680"/>
<dbReference type="PaxDb" id="4932-YJL141C"/>
<dbReference type="PeptideAtlas" id="P14680"/>
<dbReference type="EnsemblFungi" id="YJL141C_mRNA">
    <property type="protein sequence ID" value="YJL141C"/>
    <property type="gene ID" value="YJL141C"/>
</dbReference>
<dbReference type="GeneID" id="853300"/>
<dbReference type="KEGG" id="sce:YJL141C"/>
<dbReference type="AGR" id="SGD:S000003677"/>
<dbReference type="SGD" id="S000003677">
    <property type="gene designation" value="YAK1"/>
</dbReference>
<dbReference type="VEuPathDB" id="FungiDB:YJL141C"/>
<dbReference type="eggNOG" id="KOG0667">
    <property type="taxonomic scope" value="Eukaryota"/>
</dbReference>
<dbReference type="GeneTree" id="ENSGT00940000164472"/>
<dbReference type="HOGENOM" id="CLU_000288_88_4_1"/>
<dbReference type="InParanoid" id="P14680"/>
<dbReference type="OMA" id="TRTVYTY"/>
<dbReference type="OrthoDB" id="9332038at2759"/>
<dbReference type="BioCyc" id="YEAST:G3O-31586-MONOMER"/>
<dbReference type="BRENDA" id="2.7.12.1">
    <property type="organism ID" value="984"/>
</dbReference>
<dbReference type="Reactome" id="R-SCE-3899300">
    <property type="pathway name" value="SUMOylation of transcription cofactors"/>
</dbReference>
<dbReference type="BioGRID-ORCS" id="853300">
    <property type="hits" value="8 hits in 13 CRISPR screens"/>
</dbReference>
<dbReference type="PRO" id="PR:P14680"/>
<dbReference type="Proteomes" id="UP000002311">
    <property type="component" value="Chromosome X"/>
</dbReference>
<dbReference type="RNAct" id="P14680">
    <property type="molecule type" value="protein"/>
</dbReference>
<dbReference type="GO" id="GO:0005737">
    <property type="term" value="C:cytoplasm"/>
    <property type="evidence" value="ECO:0000314"/>
    <property type="project" value="SGD"/>
</dbReference>
<dbReference type="GO" id="GO:0005634">
    <property type="term" value="C:nucleus"/>
    <property type="evidence" value="ECO:0000314"/>
    <property type="project" value="SGD"/>
</dbReference>
<dbReference type="GO" id="GO:0005524">
    <property type="term" value="F:ATP binding"/>
    <property type="evidence" value="ECO:0007669"/>
    <property type="project" value="UniProtKB-KW"/>
</dbReference>
<dbReference type="GO" id="GO:0004672">
    <property type="term" value="F:protein kinase activity"/>
    <property type="evidence" value="ECO:0007005"/>
    <property type="project" value="SGD"/>
</dbReference>
<dbReference type="GO" id="GO:0106310">
    <property type="term" value="F:protein serine kinase activity"/>
    <property type="evidence" value="ECO:0007669"/>
    <property type="project" value="RHEA"/>
</dbReference>
<dbReference type="GO" id="GO:0004674">
    <property type="term" value="F:protein serine/threonine kinase activity"/>
    <property type="evidence" value="ECO:0000314"/>
    <property type="project" value="SGD"/>
</dbReference>
<dbReference type="GO" id="GO:0004712">
    <property type="term" value="F:protein serine/threonine/tyrosine kinase activity"/>
    <property type="evidence" value="ECO:0007669"/>
    <property type="project" value="UniProtKB-EC"/>
</dbReference>
<dbReference type="GO" id="GO:0004713">
    <property type="term" value="F:protein tyrosine kinase activity"/>
    <property type="evidence" value="ECO:0000314"/>
    <property type="project" value="SGD"/>
</dbReference>
<dbReference type="GO" id="GO:0141156">
    <property type="term" value="P:cAMP/PKA signal transduction"/>
    <property type="evidence" value="ECO:0000316"/>
    <property type="project" value="SGD"/>
</dbReference>
<dbReference type="GO" id="GO:0010811">
    <property type="term" value="P:positive regulation of cell-substrate adhesion"/>
    <property type="evidence" value="ECO:0000315"/>
    <property type="project" value="CACAO"/>
</dbReference>
<dbReference type="GO" id="GO:0045893">
    <property type="term" value="P:positive regulation of DNA-templated transcription"/>
    <property type="evidence" value="ECO:0000315"/>
    <property type="project" value="CACAO"/>
</dbReference>
<dbReference type="CDD" id="cd14212">
    <property type="entry name" value="PKc_YAK1"/>
    <property type="match status" value="1"/>
</dbReference>
<dbReference type="FunFam" id="3.30.200.20:FF:000087">
    <property type="entry name" value="Dual specificity tyrosine-phosphorylation-regulated kinase 1A"/>
    <property type="match status" value="1"/>
</dbReference>
<dbReference type="FunFam" id="1.10.510.10:FF:000380">
    <property type="entry name" value="Serine/threonine-protein kinase ppk15"/>
    <property type="match status" value="1"/>
</dbReference>
<dbReference type="Gene3D" id="3.30.200.20">
    <property type="entry name" value="Phosphorylase Kinase, domain 1"/>
    <property type="match status" value="1"/>
</dbReference>
<dbReference type="Gene3D" id="1.10.510.10">
    <property type="entry name" value="Transferase(Phosphotransferase) domain 1"/>
    <property type="match status" value="1"/>
</dbReference>
<dbReference type="InterPro" id="IPR011009">
    <property type="entry name" value="Kinase-like_dom_sf"/>
</dbReference>
<dbReference type="InterPro" id="IPR000719">
    <property type="entry name" value="Prot_kinase_dom"/>
</dbReference>
<dbReference type="InterPro" id="IPR017441">
    <property type="entry name" value="Protein_kinase_ATP_BS"/>
</dbReference>
<dbReference type="InterPro" id="IPR008271">
    <property type="entry name" value="Ser/Thr_kinase_AS"/>
</dbReference>
<dbReference type="InterPro" id="IPR050494">
    <property type="entry name" value="Ser_Thr_dual-spec_kinase"/>
</dbReference>
<dbReference type="PANTHER" id="PTHR24058">
    <property type="entry name" value="DUAL SPECIFICITY PROTEIN KINASE"/>
    <property type="match status" value="1"/>
</dbReference>
<dbReference type="PANTHER" id="PTHR24058:SF17">
    <property type="entry name" value="HOMEODOMAIN INTERACTING PROTEIN KINASE, ISOFORM D"/>
    <property type="match status" value="1"/>
</dbReference>
<dbReference type="Pfam" id="PF00069">
    <property type="entry name" value="Pkinase"/>
    <property type="match status" value="1"/>
</dbReference>
<dbReference type="SMART" id="SM00220">
    <property type="entry name" value="S_TKc"/>
    <property type="match status" value="1"/>
</dbReference>
<dbReference type="SUPFAM" id="SSF56112">
    <property type="entry name" value="Protein kinase-like (PK-like)"/>
    <property type="match status" value="1"/>
</dbReference>
<dbReference type="PROSITE" id="PS00107">
    <property type="entry name" value="PROTEIN_KINASE_ATP"/>
    <property type="match status" value="1"/>
</dbReference>
<dbReference type="PROSITE" id="PS50011">
    <property type="entry name" value="PROTEIN_KINASE_DOM"/>
    <property type="match status" value="1"/>
</dbReference>
<dbReference type="PROSITE" id="PS00108">
    <property type="entry name" value="PROTEIN_KINASE_ST"/>
    <property type="match status" value="1"/>
</dbReference>
<gene>
    <name type="primary">YAK1</name>
    <name type="ordered locus">YJL141C</name>
    <name type="ORF">J0652</name>
</gene>
<protein>
    <recommendedName>
        <fullName>Dual specificity protein kinase YAK1</fullName>
        <ecNumber>2.7.12.1</ecNumber>
    </recommendedName>
</protein>
<organism>
    <name type="scientific">Saccharomyces cerevisiae (strain ATCC 204508 / S288c)</name>
    <name type="common">Baker's yeast</name>
    <dbReference type="NCBI Taxonomy" id="559292"/>
    <lineage>
        <taxon>Eukaryota</taxon>
        <taxon>Fungi</taxon>
        <taxon>Dikarya</taxon>
        <taxon>Ascomycota</taxon>
        <taxon>Saccharomycotina</taxon>
        <taxon>Saccharomycetes</taxon>
        <taxon>Saccharomycetales</taxon>
        <taxon>Saccharomycetaceae</taxon>
        <taxon>Saccharomyces</taxon>
    </lineage>
</organism>
<comment type="function">
    <text evidence="5">Negative regulator of the cell cycle acting downstream of the cAMP-dependent protein kinase. Part of a glucose-sensing system involved in growth control in response to glucose availability. Phosphorylates POP2.</text>
</comment>
<comment type="catalytic activity">
    <reaction>
        <text>L-seryl-[protein] + ATP = O-phospho-L-seryl-[protein] + ADP + H(+)</text>
        <dbReference type="Rhea" id="RHEA:17989"/>
        <dbReference type="Rhea" id="RHEA-COMP:9863"/>
        <dbReference type="Rhea" id="RHEA-COMP:11604"/>
        <dbReference type="ChEBI" id="CHEBI:15378"/>
        <dbReference type="ChEBI" id="CHEBI:29999"/>
        <dbReference type="ChEBI" id="CHEBI:30616"/>
        <dbReference type="ChEBI" id="CHEBI:83421"/>
        <dbReference type="ChEBI" id="CHEBI:456216"/>
        <dbReference type="EC" id="2.7.12.1"/>
    </reaction>
</comment>
<comment type="catalytic activity">
    <reaction>
        <text>L-threonyl-[protein] + ATP = O-phospho-L-threonyl-[protein] + ADP + H(+)</text>
        <dbReference type="Rhea" id="RHEA:46608"/>
        <dbReference type="Rhea" id="RHEA-COMP:11060"/>
        <dbReference type="Rhea" id="RHEA-COMP:11605"/>
        <dbReference type="ChEBI" id="CHEBI:15378"/>
        <dbReference type="ChEBI" id="CHEBI:30013"/>
        <dbReference type="ChEBI" id="CHEBI:30616"/>
        <dbReference type="ChEBI" id="CHEBI:61977"/>
        <dbReference type="ChEBI" id="CHEBI:456216"/>
        <dbReference type="EC" id="2.7.12.1"/>
    </reaction>
</comment>
<comment type="catalytic activity">
    <reaction>
        <text>L-tyrosyl-[protein] + ATP = O-phospho-L-tyrosyl-[protein] + ADP + H(+)</text>
        <dbReference type="Rhea" id="RHEA:10596"/>
        <dbReference type="Rhea" id="RHEA-COMP:10136"/>
        <dbReference type="Rhea" id="RHEA-COMP:20101"/>
        <dbReference type="ChEBI" id="CHEBI:15378"/>
        <dbReference type="ChEBI" id="CHEBI:30616"/>
        <dbReference type="ChEBI" id="CHEBI:46858"/>
        <dbReference type="ChEBI" id="CHEBI:61978"/>
        <dbReference type="ChEBI" id="CHEBI:456216"/>
        <dbReference type="EC" id="2.7.12.1"/>
    </reaction>
</comment>
<comment type="interaction">
    <interactant intactId="EBI-20777">
        <id>P14680</id>
    </interactant>
    <interactant intactId="EBI-31686">
        <id>Q08273</id>
        <label>HRT1</label>
    </interactant>
    <organismsDiffer>false</organismsDiffer>
    <experiments>3</experiments>
</comment>
<comment type="subcellular location">
    <subcellularLocation>
        <location>Cytoplasm</location>
    </subcellularLocation>
    <subcellularLocation>
        <location>Nucleus</location>
    </subcellularLocation>
    <text>Shuttles between both compartments in response to glucose.</text>
</comment>
<comment type="PTM">
    <text evidence="4">Phosphorylated; highly.</text>
</comment>
<comment type="similarity">
    <text evidence="6">Belongs to the protein kinase superfamily. CMGC Ser/Thr protein kinase family. MNB/DYRK subfamily.</text>
</comment>
<proteinExistence type="evidence at protein level"/>
<reference key="1">
    <citation type="journal article" date="1989" name="Genes Dev.">
        <title>Loss of Ras activity in Saccharomyces cerevisiae is suppressed by disruptions of a new kinase gene, YAKI, whose product may act downstream of the cAMP-dependent protein kinase.</title>
        <authorList>
            <person name="Garrett S."/>
            <person name="Broach J."/>
        </authorList>
    </citation>
    <scope>NUCLEOTIDE SEQUENCE [GENOMIC DNA]</scope>
</reference>
<reference key="2">
    <citation type="journal article" date="1996" name="Yeast">
        <title>Sequence analysis of a 40.7 kb segment from the left arm of yeast chromosome X reveals 14 known genes and 13 new open reading frames including homologues of genes clustered on the right arm of chromosome XI.</title>
        <authorList>
            <person name="Katsoulou C."/>
            <person name="Tzermia M."/>
            <person name="Tavernarakis N."/>
            <person name="Alexandraki D."/>
        </authorList>
    </citation>
    <scope>NUCLEOTIDE SEQUENCE [GENOMIC DNA]</scope>
    <source>
        <strain>ATCC 96604 / S288c / FY1679</strain>
    </source>
</reference>
<reference key="3">
    <citation type="journal article" date="1996" name="EMBO J.">
        <title>Complete nucleotide sequence of Saccharomyces cerevisiae chromosome X.</title>
        <authorList>
            <person name="Galibert F."/>
            <person name="Alexandraki D."/>
            <person name="Baur A."/>
            <person name="Boles E."/>
            <person name="Chalwatzis N."/>
            <person name="Chuat J.-C."/>
            <person name="Coster F."/>
            <person name="Cziepluch C."/>
            <person name="de Haan M."/>
            <person name="Domdey H."/>
            <person name="Durand P."/>
            <person name="Entian K.-D."/>
            <person name="Gatius M."/>
            <person name="Goffeau A."/>
            <person name="Grivell L.A."/>
            <person name="Hennemann A."/>
            <person name="Herbert C.J."/>
            <person name="Heumann K."/>
            <person name="Hilger F."/>
            <person name="Hollenberg C.P."/>
            <person name="Huang M.-E."/>
            <person name="Jacq C."/>
            <person name="Jauniaux J.-C."/>
            <person name="Katsoulou C."/>
            <person name="Kirchrath L."/>
            <person name="Kleine K."/>
            <person name="Kordes E."/>
            <person name="Koetter P."/>
            <person name="Liebl S."/>
            <person name="Louis E.J."/>
            <person name="Manus V."/>
            <person name="Mewes H.-W."/>
            <person name="Miosga T."/>
            <person name="Obermaier B."/>
            <person name="Perea J."/>
            <person name="Pohl T.M."/>
            <person name="Portetelle D."/>
            <person name="Pujol A."/>
            <person name="Purnelle B."/>
            <person name="Ramezani Rad M."/>
            <person name="Rasmussen S.W."/>
            <person name="Rose M."/>
            <person name="Rossau R."/>
            <person name="Schaaff-Gerstenschlaeger I."/>
            <person name="Smits P.H.M."/>
            <person name="Scarcez T."/>
            <person name="Soriano N."/>
            <person name="To Van D."/>
            <person name="Tzermia M."/>
            <person name="Van Broekhoven A."/>
            <person name="Vandenbol M."/>
            <person name="Wedler H."/>
            <person name="von Wettstein D."/>
            <person name="Wambutt R."/>
            <person name="Zagulski M."/>
            <person name="Zollner A."/>
            <person name="Karpfinger-Hartl L."/>
        </authorList>
    </citation>
    <scope>NUCLEOTIDE SEQUENCE [LARGE SCALE GENOMIC DNA]</scope>
    <source>
        <strain>ATCC 204508 / S288c</strain>
    </source>
</reference>
<reference key="4">
    <citation type="journal article" date="2014" name="G3 (Bethesda)">
        <title>The reference genome sequence of Saccharomyces cerevisiae: Then and now.</title>
        <authorList>
            <person name="Engel S.R."/>
            <person name="Dietrich F.S."/>
            <person name="Fisk D.G."/>
            <person name="Binkley G."/>
            <person name="Balakrishnan R."/>
            <person name="Costanzo M.C."/>
            <person name="Dwight S.S."/>
            <person name="Hitz B.C."/>
            <person name="Karra K."/>
            <person name="Nash R.S."/>
            <person name="Weng S."/>
            <person name="Wong E.D."/>
            <person name="Lloyd P."/>
            <person name="Skrzypek M.S."/>
            <person name="Miyasato S.R."/>
            <person name="Simison M."/>
            <person name="Cherry J.M."/>
        </authorList>
    </citation>
    <scope>GENOME REANNOTATION</scope>
    <source>
        <strain>ATCC 204508 / S288c</strain>
    </source>
</reference>
<reference key="5">
    <citation type="journal article" date="2001" name="Genes Dev.">
        <title>Yak1p, a DYRK family kinase, translocates to the nucleus and phosphorylates yeast Pop2p in response to a glucose signal.</title>
        <authorList>
            <person name="Moriya H."/>
            <person name="Shimizu-Yoshida Y."/>
            <person name="Omori A."/>
            <person name="Iwashita S."/>
            <person name="Katoh M."/>
            <person name="Sakai A."/>
        </authorList>
    </citation>
    <scope>FUNCTION</scope>
</reference>
<reference key="6">
    <citation type="journal article" date="2000" name="Biochem. J.">
        <title>Saccharomyces cerevisiae Yak1p protein kinase autophosphorylates on tyrosine residues and phosphorylates myelin basic protein on a C-terminal serine residue.</title>
        <authorList>
            <person name="Kassis S."/>
            <person name="Melhuish T."/>
            <person name="Annan R.S."/>
            <person name="Chen S.L."/>
            <person name="Lee J.C."/>
            <person name="Livi G.P."/>
            <person name="Creasy C.L."/>
        </authorList>
    </citation>
    <scope>PHOSPHORYLATION AT TYR-530</scope>
</reference>
<reference key="7">
    <citation type="journal article" date="2005" name="Mol. Cell. Proteomics">
        <title>Quantitative phosphoproteomics applied to the yeast pheromone signaling pathway.</title>
        <authorList>
            <person name="Gruhler A."/>
            <person name="Olsen J.V."/>
            <person name="Mohammed S."/>
            <person name="Mortensen P."/>
            <person name="Faergeman N.J."/>
            <person name="Mann M."/>
            <person name="Jensen O.N."/>
        </authorList>
    </citation>
    <scope>IDENTIFICATION BY MASS SPECTROMETRY [LARGE SCALE ANALYSIS]</scope>
    <source>
        <strain>YAL6B</strain>
    </source>
</reference>
<reference key="8">
    <citation type="journal article" date="2007" name="J. Proteome Res.">
        <title>Large-scale phosphorylation analysis of alpha-factor-arrested Saccharomyces cerevisiae.</title>
        <authorList>
            <person name="Li X."/>
            <person name="Gerber S.A."/>
            <person name="Rudner A.D."/>
            <person name="Beausoleil S.A."/>
            <person name="Haas W."/>
            <person name="Villen J."/>
            <person name="Elias J.E."/>
            <person name="Gygi S.P."/>
        </authorList>
    </citation>
    <scope>PHOSPHORYLATION [LARGE SCALE ANALYSIS] AT SER-127 AND TYR-530</scope>
    <scope>IDENTIFICATION BY MASS SPECTROMETRY [LARGE SCALE ANALYSIS]</scope>
    <source>
        <strain>ADR376</strain>
    </source>
</reference>
<reference key="9">
    <citation type="journal article" date="2007" name="Proc. Natl. Acad. Sci. U.S.A.">
        <title>Analysis of phosphorylation sites on proteins from Saccharomyces cerevisiae by electron transfer dissociation (ETD) mass spectrometry.</title>
        <authorList>
            <person name="Chi A."/>
            <person name="Huttenhower C."/>
            <person name="Geer L.Y."/>
            <person name="Coon J.J."/>
            <person name="Syka J.E.P."/>
            <person name="Bai D.L."/>
            <person name="Shabanowitz J."/>
            <person name="Burke D.J."/>
            <person name="Troyanskaya O.G."/>
            <person name="Hunt D.F."/>
        </authorList>
    </citation>
    <scope>PHOSPHORYLATION [LARGE SCALE ANALYSIS] AT SER-295</scope>
    <scope>IDENTIFICATION BY MASS SPECTROMETRY [LARGE SCALE ANALYSIS]</scope>
</reference>
<reference key="10">
    <citation type="journal article" date="2008" name="Mol. Cell. Proteomics">
        <title>A multidimensional chromatography technology for in-depth phosphoproteome analysis.</title>
        <authorList>
            <person name="Albuquerque C.P."/>
            <person name="Smolka M.B."/>
            <person name="Payne S.H."/>
            <person name="Bafna V."/>
            <person name="Eng J."/>
            <person name="Zhou H."/>
        </authorList>
    </citation>
    <scope>PHOSPHORYLATION [LARGE SCALE ANALYSIS] AT SER-38 AND THR-288</scope>
    <scope>IDENTIFICATION BY MASS SPECTROMETRY [LARGE SCALE ANALYSIS]</scope>
</reference>
<reference key="11">
    <citation type="journal article" date="2009" name="Science">
        <title>Global analysis of Cdk1 substrate phosphorylation sites provides insights into evolution.</title>
        <authorList>
            <person name="Holt L.J."/>
            <person name="Tuch B.B."/>
            <person name="Villen J."/>
            <person name="Johnson A.D."/>
            <person name="Gygi S.P."/>
            <person name="Morgan D.O."/>
        </authorList>
    </citation>
    <scope>PHOSPHORYLATION [LARGE SCALE ANALYSIS] AT SER-115; SER-118; SER-127; SER-206; SER-240; SER-245; SER-247; THR-288 AND TYR-530</scope>
    <scope>IDENTIFICATION BY MASS SPECTROMETRY [LARGE SCALE ANALYSIS]</scope>
</reference>